<comment type="function">
    <text evidence="6 8 9">Isoform E is a PKA-dependent transcriptional activator. Isoform J is a direct antagonist of activation by isoform E in cell culture. Binds the cAMP response element (CRE) (consensus: 5'-GTGACGT[AC][AG]-3'), a sequence present in many viral and cellular promoters (PubMed:15219829, PubMed:7651429). Has a role in long-term memory (PubMed:29473541).</text>
</comment>
<comment type="subunit">
    <text evidence="9">Homodimer.</text>
</comment>
<comment type="subcellular location">
    <subcellularLocation>
        <location evidence="2 3 9">Nucleus</location>
    </subcellularLocation>
</comment>
<comment type="alternative products">
    <event type="alternative splicing"/>
    <isoform>
        <id>Q9VWW0-1</id>
        <name evidence="9">E</name>
        <name evidence="12">dCREB2-a</name>
        <sequence type="displayed"/>
    </isoform>
    <isoform>
        <id>Q9VWW0-3</id>
        <name evidence="9">D</name>
        <name evidence="12">dCREB2-d</name>
        <sequence type="described" ref="VSP_051590"/>
    </isoform>
    <isoform>
        <id>Q9VWW0-4</id>
        <name evidence="9">F</name>
        <name evidence="12">dCREB2-c</name>
        <name>H</name>
        <sequence type="described" ref="VSP_051590 VSP_051592"/>
    </isoform>
    <isoform>
        <id>Q9VWW0-2</id>
        <name>G</name>
        <name evidence="6">dCREB2-e</name>
        <name>I</name>
        <sequence type="described" ref="VSP_051590 VSP_051591"/>
    </isoform>
    <isoform>
        <id>Q9VWW0-5</id>
        <name>J</name>
        <name evidence="12">dCREB2-b</name>
        <sequence type="described" ref="VSP_051590 VSP_051591 VSP_051592"/>
    </isoform>
</comment>
<comment type="tissue specificity">
    <text evidence="9">Most cells of the adult brain; cell bodies, but not neuropil.</text>
</comment>
<comment type="developmental stage">
    <text evidence="6 9 10">Throughout development with lowest levels in first larval instar and late pupae.</text>
</comment>
<comment type="disruption phenotype">
    <text evidence="8">RNAi-mediated knockdown in the mushroom bodies results in a reduction in long-term memory performance, but does not affect anesthesia-resistant memory (ARM) or learning ability.</text>
</comment>
<comment type="miscellaneous">
    <molecule>Isoform G</molecule>
    <text evidence="14">Isolated from Schneider 2 cells.</text>
</comment>
<comment type="similarity">
    <text evidence="1">Belongs to the bZIP family. ATF subfamily.</text>
</comment>
<comment type="sequence caution" evidence="14">
    <conflict type="erroneous initiation">
        <sequence resource="EMBL-CDS" id="ABI34195"/>
    </conflict>
</comment>
<comment type="sequence caution" evidence="14">
    <conflict type="erroneous initiation">
        <sequence resource="EMBL-CDS" id="ABI34226"/>
    </conflict>
</comment>
<keyword id="KW-0010">Activator</keyword>
<keyword id="KW-0025">Alternative splicing</keyword>
<keyword id="KW-0238">DNA-binding</keyword>
<keyword id="KW-0539">Nucleus</keyword>
<keyword id="KW-0597">Phosphoprotein</keyword>
<keyword id="KW-1185">Reference proteome</keyword>
<keyword id="KW-0804">Transcription</keyword>
<keyword id="KW-0805">Transcription regulation</keyword>
<evidence type="ECO:0000255" key="1"/>
<evidence type="ECO:0000255" key="2">
    <source>
        <dbReference type="PROSITE-ProRule" id="PRU00312"/>
    </source>
</evidence>
<evidence type="ECO:0000255" key="3">
    <source>
        <dbReference type="PROSITE-ProRule" id="PRU00978"/>
    </source>
</evidence>
<evidence type="ECO:0000256" key="4">
    <source>
        <dbReference type="SAM" id="MobiDB-lite"/>
    </source>
</evidence>
<evidence type="ECO:0000269" key="5">
    <source>
    </source>
</evidence>
<evidence type="ECO:0000269" key="6">
    <source>
    </source>
</evidence>
<evidence type="ECO:0000269" key="7">
    <source>
    </source>
</evidence>
<evidence type="ECO:0000269" key="8">
    <source>
    </source>
</evidence>
<evidence type="ECO:0000269" key="9">
    <source>
    </source>
</evidence>
<evidence type="ECO:0000269" key="10">
    <source>
    </source>
</evidence>
<evidence type="ECO:0000303" key="11">
    <source>
    </source>
</evidence>
<evidence type="ECO:0000303" key="12">
    <source>
    </source>
</evidence>
<evidence type="ECO:0000303" key="13">
    <source ref="6"/>
</evidence>
<evidence type="ECO:0000305" key="14"/>
<evidence type="ECO:0000312" key="15">
    <source>
        <dbReference type="EMBL" id="AAB28337.1"/>
    </source>
</evidence>
<evidence type="ECO:0000312" key="16">
    <source>
        <dbReference type="EMBL" id="AAB35092.1"/>
    </source>
</evidence>
<evidence type="ECO:0000312" key="17">
    <source>
        <dbReference type="EMBL" id="AAF48827.1"/>
    </source>
</evidence>
<evidence type="ECO:0000312" key="18">
    <source>
        <dbReference type="FlyBase" id="FBgn0265784"/>
    </source>
</evidence>
<dbReference type="EMBL" id="S65627">
    <property type="protein sequence ID" value="AAB28337.1"/>
    <property type="molecule type" value="Genomic_DNA"/>
</dbReference>
<dbReference type="EMBL" id="S65623">
    <property type="protein sequence ID" value="AAB28337.1"/>
    <property type="status" value="JOINED"/>
    <property type="molecule type" value="Genomic_DNA"/>
</dbReference>
<dbReference type="EMBL" id="S65626">
    <property type="protein sequence ID" value="AAB28337.1"/>
    <property type="status" value="JOINED"/>
    <property type="molecule type" value="Genomic_DNA"/>
</dbReference>
<dbReference type="EMBL" id="S79274">
    <property type="protein sequence ID" value="AAB35092.1"/>
    <property type="molecule type" value="mRNA"/>
</dbReference>
<dbReference type="EMBL" id="AE014298">
    <property type="protein sequence ID" value="AAF48827.1"/>
    <property type="molecule type" value="Genomic_DNA"/>
</dbReference>
<dbReference type="EMBL" id="AE014298">
    <property type="protein sequence ID" value="AAN09464.2"/>
    <property type="molecule type" value="Genomic_DNA"/>
</dbReference>
<dbReference type="EMBL" id="AE014298">
    <property type="protein sequence ID" value="AAS65402.1"/>
    <property type="molecule type" value="Genomic_DNA"/>
</dbReference>
<dbReference type="EMBL" id="AE014298">
    <property type="protein sequence ID" value="AAS65403.2"/>
    <property type="molecule type" value="Genomic_DNA"/>
</dbReference>
<dbReference type="EMBL" id="AE014298">
    <property type="protein sequence ID" value="ABW09445.2"/>
    <property type="molecule type" value="Genomic_DNA"/>
</dbReference>
<dbReference type="EMBL" id="AE014298">
    <property type="protein sequence ID" value="ABW09446.1"/>
    <property type="molecule type" value="Genomic_DNA"/>
</dbReference>
<dbReference type="EMBL" id="AE014298">
    <property type="protein sequence ID" value="ABW09447.1"/>
    <property type="molecule type" value="Genomic_DNA"/>
</dbReference>
<dbReference type="EMBL" id="BT028813">
    <property type="protein sequence ID" value="ABI34194.2"/>
    <property type="molecule type" value="mRNA"/>
</dbReference>
<dbReference type="EMBL" id="BT028814">
    <property type="protein sequence ID" value="ABI34195.3"/>
    <property type="status" value="ALT_INIT"/>
    <property type="molecule type" value="mRNA"/>
</dbReference>
<dbReference type="EMBL" id="BT028845">
    <property type="protein sequence ID" value="ABI34226.3"/>
    <property type="status" value="ALT_INIT"/>
    <property type="molecule type" value="mRNA"/>
</dbReference>
<dbReference type="RefSeq" id="NP_001097016.2">
    <molecule id="Q9VWW0-5"/>
    <property type="nucleotide sequence ID" value="NM_001103546.3"/>
</dbReference>
<dbReference type="RefSeq" id="NP_001097017.1">
    <molecule id="Q9VWW0-2"/>
    <property type="nucleotide sequence ID" value="NM_001103547.4"/>
</dbReference>
<dbReference type="RefSeq" id="NP_001097018.1">
    <molecule id="Q9VWW0-5"/>
    <property type="nucleotide sequence ID" value="NM_001103548.4"/>
</dbReference>
<dbReference type="RefSeq" id="NP_001259677.1">
    <molecule id="Q9VWW0-2"/>
    <property type="nucleotide sequence ID" value="NM_001272748.3"/>
</dbReference>
<dbReference type="RefSeq" id="NP_001259678.1">
    <molecule id="Q9VWW0-5"/>
    <property type="nucleotide sequence ID" value="NM_001272749.2"/>
</dbReference>
<dbReference type="RefSeq" id="NP_001334685.1">
    <molecule id="Q9VWW0-3"/>
    <property type="nucleotide sequence ID" value="NM_001347813.2"/>
</dbReference>
<dbReference type="RefSeq" id="NP_996504.1">
    <molecule id="Q9VWW0-4"/>
    <property type="nucleotide sequence ID" value="NM_206781.4"/>
</dbReference>
<dbReference type="RefSeq" id="NP_996506.2">
    <molecule id="Q9VWW0-2"/>
    <property type="nucleotide sequence ID" value="NM_206783.4"/>
</dbReference>
<dbReference type="SMR" id="Q9VWW0"/>
<dbReference type="BioGRID" id="59134">
    <property type="interactions" value="31"/>
</dbReference>
<dbReference type="FunCoup" id="Q9VWW0">
    <property type="interactions" value="1358"/>
</dbReference>
<dbReference type="IntAct" id="Q9VWW0">
    <property type="interactions" value="15"/>
</dbReference>
<dbReference type="STRING" id="7227.FBpp0402805"/>
<dbReference type="GlyGen" id="Q9VWW0">
    <property type="glycosylation" value="1 site"/>
</dbReference>
<dbReference type="iPTMnet" id="Q9VWW0"/>
<dbReference type="PaxDb" id="7227-FBpp0074326"/>
<dbReference type="DNASU" id="32817"/>
<dbReference type="EnsemblMetazoa" id="FBtr0074555">
    <molecule id="Q9VWW0-2"/>
    <property type="protein sequence ID" value="FBpp0074327"/>
    <property type="gene ID" value="FBgn0265784"/>
</dbReference>
<dbReference type="EnsemblMetazoa" id="FBtr0074557">
    <molecule id="Q9VWW0-4"/>
    <property type="protein sequence ID" value="FBpp0074329"/>
    <property type="gene ID" value="FBgn0265784"/>
</dbReference>
<dbReference type="EnsemblMetazoa" id="FBtr0112878">
    <molecule id="Q9VWW0-2"/>
    <property type="protein sequence ID" value="FBpp0111791"/>
    <property type="gene ID" value="FBgn0265784"/>
</dbReference>
<dbReference type="EnsemblMetazoa" id="FBtr0112879">
    <molecule id="Q9VWW0-5"/>
    <property type="protein sequence ID" value="FBpp0111792"/>
    <property type="gene ID" value="FBgn0265784"/>
</dbReference>
<dbReference type="EnsemblMetazoa" id="FBtr0310340">
    <molecule id="Q9VWW0-2"/>
    <property type="protein sequence ID" value="FBpp0302023"/>
    <property type="gene ID" value="FBgn0265784"/>
</dbReference>
<dbReference type="EnsemblMetazoa" id="FBtr0310341">
    <molecule id="Q9VWW0-5"/>
    <property type="protein sequence ID" value="FBpp0302024"/>
    <property type="gene ID" value="FBgn0265784"/>
</dbReference>
<dbReference type="EnsemblMetazoa" id="FBtr0346093">
    <molecule id="Q9VWW0-5"/>
    <property type="protein sequence ID" value="FBpp0311927"/>
    <property type="gene ID" value="FBgn0265784"/>
</dbReference>
<dbReference type="EnsemblMetazoa" id="FBtr0446106">
    <molecule id="Q9VWW0-3"/>
    <property type="protein sequence ID" value="FBpp0402805"/>
    <property type="gene ID" value="FBgn0265784"/>
</dbReference>
<dbReference type="GeneID" id="32817"/>
<dbReference type="KEGG" id="dme:Dmel_CG6103"/>
<dbReference type="AGR" id="FB:FBgn0265784"/>
<dbReference type="CTD" id="32817"/>
<dbReference type="FlyBase" id="FBgn0265784">
    <property type="gene designation" value="CrebB"/>
</dbReference>
<dbReference type="VEuPathDB" id="VectorBase:FBgn0265784"/>
<dbReference type="eggNOG" id="KOG3584">
    <property type="taxonomic scope" value="Eukaryota"/>
</dbReference>
<dbReference type="GeneTree" id="ENSGT00940000173530"/>
<dbReference type="InParanoid" id="Q9VWW0"/>
<dbReference type="OMA" id="LHMAPDP"/>
<dbReference type="OrthoDB" id="5970722at2759"/>
<dbReference type="PhylomeDB" id="Q9VWW0"/>
<dbReference type="Reactome" id="R-DME-198693">
    <property type="pathway name" value="AKT phosphorylates targets in the nucleus"/>
</dbReference>
<dbReference type="Reactome" id="R-DME-199920">
    <property type="pathway name" value="CREB phosphorylation"/>
</dbReference>
<dbReference type="Reactome" id="R-DME-375165">
    <property type="pathway name" value="NCAM signaling for neurite out-growth"/>
</dbReference>
<dbReference type="Reactome" id="R-DME-442742">
    <property type="pathway name" value="CREB1 phosphorylation through NMDA receptor-mediated activation of RAS signaling"/>
</dbReference>
<dbReference type="Reactome" id="R-DME-881907">
    <property type="pathway name" value="Gastrin-CREB signalling pathway via PKC and MAPK"/>
</dbReference>
<dbReference type="Reactome" id="R-DME-9634638">
    <property type="pathway name" value="Estrogen-dependent nuclear events downstream of ESR-membrane signaling"/>
</dbReference>
<dbReference type="SignaLink" id="Q9VWW0"/>
<dbReference type="BioGRID-ORCS" id="32817">
    <property type="hits" value="0 hits in 3 CRISPR screens"/>
</dbReference>
<dbReference type="GenomeRNAi" id="32817"/>
<dbReference type="PRO" id="PR:Q9VWW0"/>
<dbReference type="Proteomes" id="UP000000803">
    <property type="component" value="Chromosome X"/>
</dbReference>
<dbReference type="Bgee" id="FBgn0265784">
    <property type="expression patterns" value="Expressed in distal medullary amacrine neuron Dm11 in insect head and 219 other cell types or tissues"/>
</dbReference>
<dbReference type="ExpressionAtlas" id="Q9VWW0">
    <property type="expression patterns" value="baseline and differential"/>
</dbReference>
<dbReference type="GO" id="GO:0005634">
    <property type="term" value="C:nucleus"/>
    <property type="evidence" value="ECO:0000314"/>
    <property type="project" value="UniProtKB"/>
</dbReference>
<dbReference type="GO" id="GO:0005667">
    <property type="term" value="C:transcription regulator complex"/>
    <property type="evidence" value="ECO:0000318"/>
    <property type="project" value="GO_Central"/>
</dbReference>
<dbReference type="GO" id="GO:0003677">
    <property type="term" value="F:DNA binding"/>
    <property type="evidence" value="ECO:0000315"/>
    <property type="project" value="UniProtKB"/>
</dbReference>
<dbReference type="GO" id="GO:0000981">
    <property type="term" value="F:DNA-binding transcription factor activity, RNA polymerase II-specific"/>
    <property type="evidence" value="ECO:0000318"/>
    <property type="project" value="GO_Central"/>
</dbReference>
<dbReference type="GO" id="GO:0000978">
    <property type="term" value="F:RNA polymerase II cis-regulatory region sequence-specific DNA binding"/>
    <property type="evidence" value="ECO:0000318"/>
    <property type="project" value="GO_Central"/>
</dbReference>
<dbReference type="GO" id="GO:0043565">
    <property type="term" value="F:sequence-specific DNA binding"/>
    <property type="evidence" value="ECO:0000314"/>
    <property type="project" value="FlyBase"/>
</dbReference>
<dbReference type="GO" id="GO:0007623">
    <property type="term" value="P:circadian rhythm"/>
    <property type="evidence" value="ECO:0000304"/>
    <property type="project" value="FlyBase"/>
</dbReference>
<dbReference type="GO" id="GO:0007611">
    <property type="term" value="P:learning or memory"/>
    <property type="evidence" value="ECO:0000303"/>
    <property type="project" value="FlyBase"/>
</dbReference>
<dbReference type="GO" id="GO:0045475">
    <property type="term" value="P:locomotor rhythm"/>
    <property type="evidence" value="ECO:0000303"/>
    <property type="project" value="FlyBase"/>
</dbReference>
<dbReference type="GO" id="GO:0007616">
    <property type="term" value="P:long-term memory"/>
    <property type="evidence" value="ECO:0000314"/>
    <property type="project" value="FlyBase"/>
</dbReference>
<dbReference type="GO" id="GO:0072375">
    <property type="term" value="P:medium-term memory"/>
    <property type="evidence" value="ECO:0000315"/>
    <property type="project" value="FlyBase"/>
</dbReference>
<dbReference type="GO" id="GO:0007528">
    <property type="term" value="P:neuromuscular junction development"/>
    <property type="evidence" value="ECO:0000315"/>
    <property type="project" value="FlyBase"/>
</dbReference>
<dbReference type="GO" id="GO:2000253">
    <property type="term" value="P:positive regulation of feeding behavior"/>
    <property type="evidence" value="ECO:0000316"/>
    <property type="project" value="FlyBase"/>
</dbReference>
<dbReference type="GO" id="GO:0045944">
    <property type="term" value="P:positive regulation of transcription by RNA polymerase II"/>
    <property type="evidence" value="ECO:0000315"/>
    <property type="project" value="FlyBase"/>
</dbReference>
<dbReference type="GO" id="GO:0045187">
    <property type="term" value="P:regulation of circadian sleep/wake cycle, sleep"/>
    <property type="evidence" value="ECO:0000304"/>
    <property type="project" value="FlyBase"/>
</dbReference>
<dbReference type="GO" id="GO:0006355">
    <property type="term" value="P:regulation of DNA-templated transcription"/>
    <property type="evidence" value="ECO:0000315"/>
    <property type="project" value="UniProtKB"/>
</dbReference>
<dbReference type="GO" id="GO:0006357">
    <property type="term" value="P:regulation of transcription by RNA polymerase II"/>
    <property type="evidence" value="ECO:0000318"/>
    <property type="project" value="GO_Central"/>
</dbReference>
<dbReference type="GO" id="GO:0007622">
    <property type="term" value="P:rhythmic behavior"/>
    <property type="evidence" value="ECO:0000304"/>
    <property type="project" value="FlyBase"/>
</dbReference>
<dbReference type="GO" id="GO:0030431">
    <property type="term" value="P:sleep"/>
    <property type="evidence" value="ECO:0000315"/>
    <property type="project" value="FlyBase"/>
</dbReference>
<dbReference type="GO" id="GO:0040040">
    <property type="term" value="P:thermosensory behavior"/>
    <property type="evidence" value="ECO:0000315"/>
    <property type="project" value="FlyBase"/>
</dbReference>
<dbReference type="CDD" id="cd14690">
    <property type="entry name" value="bZIP_CREB1"/>
    <property type="match status" value="1"/>
</dbReference>
<dbReference type="FunFam" id="1.20.5.170:FF:000003">
    <property type="entry name" value="cAMP-responsive element modulator isoform X2"/>
    <property type="match status" value="1"/>
</dbReference>
<dbReference type="Gene3D" id="1.20.5.170">
    <property type="match status" value="1"/>
</dbReference>
<dbReference type="InterPro" id="IPR004827">
    <property type="entry name" value="bZIP"/>
</dbReference>
<dbReference type="InterPro" id="IPR046347">
    <property type="entry name" value="bZIP_sf"/>
</dbReference>
<dbReference type="InterPro" id="IPR003102">
    <property type="entry name" value="CREB1-like_pKID"/>
</dbReference>
<dbReference type="InterPro" id="IPR001630">
    <property type="entry name" value="Leuzip_CREB"/>
</dbReference>
<dbReference type="PANTHER" id="PTHR45879">
    <property type="entry name" value="CYCLIC AMP RESPONSE ELEMENT-BINDING PROTEIN B"/>
    <property type="match status" value="1"/>
</dbReference>
<dbReference type="PANTHER" id="PTHR45879:SF3">
    <property type="entry name" value="CYCLIC AMP RESPONSE ELEMENT-BINDING PROTEIN B"/>
    <property type="match status" value="1"/>
</dbReference>
<dbReference type="Pfam" id="PF00170">
    <property type="entry name" value="bZIP_1"/>
    <property type="match status" value="1"/>
</dbReference>
<dbReference type="Pfam" id="PF02173">
    <property type="entry name" value="pKID"/>
    <property type="match status" value="1"/>
</dbReference>
<dbReference type="PRINTS" id="PR00041">
    <property type="entry name" value="LEUZIPPRCREB"/>
</dbReference>
<dbReference type="SMART" id="SM00338">
    <property type="entry name" value="BRLZ"/>
    <property type="match status" value="1"/>
</dbReference>
<dbReference type="SUPFAM" id="SSF57959">
    <property type="entry name" value="Leucine zipper domain"/>
    <property type="match status" value="1"/>
</dbReference>
<dbReference type="PROSITE" id="PS50217">
    <property type="entry name" value="BZIP"/>
    <property type="match status" value="1"/>
</dbReference>
<dbReference type="PROSITE" id="PS00036">
    <property type="entry name" value="BZIP_BASIC"/>
    <property type="match status" value="1"/>
</dbReference>
<dbReference type="PROSITE" id="PS50953">
    <property type="entry name" value="KID"/>
    <property type="match status" value="1"/>
</dbReference>
<reference evidence="14 15" key="1">
    <citation type="journal article" date="1993" name="DNA Cell Biol.">
        <title>Isolation of Drosophila CREB-B: a novel CRE-binding protein.</title>
        <authorList>
            <person name="Usui T."/>
            <person name="Smolik S.M."/>
            <person name="Goodman R.H."/>
        </authorList>
    </citation>
    <scope>NUCLEOTIDE SEQUENCE [GENOMIC DNA] (ISOFORM F)</scope>
    <scope>DEVELOPMENTAL STAGE</scope>
    <source>
        <tissue evidence="10">Head</tissue>
    </source>
</reference>
<reference evidence="14 16" key="2">
    <citation type="journal article" date="1995" name="Mol. Cell. Biol.">
        <title>A Drosophila CREB/CREM homolog encodes multiple isoforms, including a cyclic AMP-dependent protein kinase-responsive transcriptional activator and antagonist.</title>
        <authorList>
            <person name="Yin J.C.P."/>
            <person name="Wallach J.S."/>
            <person name="Wilder E.L."/>
            <person name="Klingensmith J."/>
            <person name="Dang D."/>
            <person name="Perrimon N."/>
            <person name="Zhou H."/>
            <person name="Tully T."/>
            <person name="Quinn W.G."/>
        </authorList>
    </citation>
    <scope>NUCLEOTIDE SEQUENCE [MRNA] (ISOFORMS D; E; F; G AND J)</scope>
    <scope>FUNCTION</scope>
    <scope>SUBUNIT</scope>
    <scope>SUBCELLULAR LOCATION</scope>
    <scope>TISSUE SPECIFICITY</scope>
    <scope>DEVELOPMENTAL STAGE</scope>
    <scope>MUTAGENESIS OF LEU-328 AND LEU-335</scope>
    <source>
        <tissue evidence="9">Head</tissue>
    </source>
</reference>
<reference evidence="14" key="3">
    <citation type="journal article" date="2004" name="Biochem. Biophys. Res. Commun.">
        <title>Isoforms of cyclic AMP response element binding proteins in Drosophila S2 cells.</title>
        <authorList>
            <person name="Poels J."/>
            <person name="Franssens V."/>
            <person name="Van Loy T."/>
            <person name="Martinez A."/>
            <person name="Suner M.M."/>
            <person name="Dunbar S.J."/>
            <person name="De Loof A."/>
            <person name="Vanden Broeck J."/>
        </authorList>
    </citation>
    <scope>NUCLEOTIDE SEQUENCE [MRNA] (ISOFORM G)</scope>
    <scope>FUNCTION</scope>
    <scope>DEVELOPMENTAL STAGE</scope>
</reference>
<reference evidence="17" key="4">
    <citation type="journal article" date="2000" name="Science">
        <title>The genome sequence of Drosophila melanogaster.</title>
        <authorList>
            <person name="Adams M.D."/>
            <person name="Celniker S.E."/>
            <person name="Holt R.A."/>
            <person name="Evans C.A."/>
            <person name="Gocayne J.D."/>
            <person name="Amanatides P.G."/>
            <person name="Scherer S.E."/>
            <person name="Li P.W."/>
            <person name="Hoskins R.A."/>
            <person name="Galle R.F."/>
            <person name="George R.A."/>
            <person name="Lewis S.E."/>
            <person name="Richards S."/>
            <person name="Ashburner M."/>
            <person name="Henderson S.N."/>
            <person name="Sutton G.G."/>
            <person name="Wortman J.R."/>
            <person name="Yandell M.D."/>
            <person name="Zhang Q."/>
            <person name="Chen L.X."/>
            <person name="Brandon R.C."/>
            <person name="Rogers Y.-H.C."/>
            <person name="Blazej R.G."/>
            <person name="Champe M."/>
            <person name="Pfeiffer B.D."/>
            <person name="Wan K.H."/>
            <person name="Doyle C."/>
            <person name="Baxter E.G."/>
            <person name="Helt G."/>
            <person name="Nelson C.R."/>
            <person name="Miklos G.L.G."/>
            <person name="Abril J.F."/>
            <person name="Agbayani A."/>
            <person name="An H.-J."/>
            <person name="Andrews-Pfannkoch C."/>
            <person name="Baldwin D."/>
            <person name="Ballew R.M."/>
            <person name="Basu A."/>
            <person name="Baxendale J."/>
            <person name="Bayraktaroglu L."/>
            <person name="Beasley E.M."/>
            <person name="Beeson K.Y."/>
            <person name="Benos P.V."/>
            <person name="Berman B.P."/>
            <person name="Bhandari D."/>
            <person name="Bolshakov S."/>
            <person name="Borkova D."/>
            <person name="Botchan M.R."/>
            <person name="Bouck J."/>
            <person name="Brokstein P."/>
            <person name="Brottier P."/>
            <person name="Burtis K.C."/>
            <person name="Busam D.A."/>
            <person name="Butler H."/>
            <person name="Cadieu E."/>
            <person name="Center A."/>
            <person name="Chandra I."/>
            <person name="Cherry J.M."/>
            <person name="Cawley S."/>
            <person name="Dahlke C."/>
            <person name="Davenport L.B."/>
            <person name="Davies P."/>
            <person name="de Pablos B."/>
            <person name="Delcher A."/>
            <person name="Deng Z."/>
            <person name="Mays A.D."/>
            <person name="Dew I."/>
            <person name="Dietz S.M."/>
            <person name="Dodson K."/>
            <person name="Doup L.E."/>
            <person name="Downes M."/>
            <person name="Dugan-Rocha S."/>
            <person name="Dunkov B.C."/>
            <person name="Dunn P."/>
            <person name="Durbin K.J."/>
            <person name="Evangelista C.C."/>
            <person name="Ferraz C."/>
            <person name="Ferriera S."/>
            <person name="Fleischmann W."/>
            <person name="Fosler C."/>
            <person name="Gabrielian A.E."/>
            <person name="Garg N.S."/>
            <person name="Gelbart W.M."/>
            <person name="Glasser K."/>
            <person name="Glodek A."/>
            <person name="Gong F."/>
            <person name="Gorrell J.H."/>
            <person name="Gu Z."/>
            <person name="Guan P."/>
            <person name="Harris M."/>
            <person name="Harris N.L."/>
            <person name="Harvey D.A."/>
            <person name="Heiman T.J."/>
            <person name="Hernandez J.R."/>
            <person name="Houck J."/>
            <person name="Hostin D."/>
            <person name="Houston K.A."/>
            <person name="Howland T.J."/>
            <person name="Wei M.-H."/>
            <person name="Ibegwam C."/>
            <person name="Jalali M."/>
            <person name="Kalush F."/>
            <person name="Karpen G.H."/>
            <person name="Ke Z."/>
            <person name="Kennison J.A."/>
            <person name="Ketchum K.A."/>
            <person name="Kimmel B.E."/>
            <person name="Kodira C.D."/>
            <person name="Kraft C.L."/>
            <person name="Kravitz S."/>
            <person name="Kulp D."/>
            <person name="Lai Z."/>
            <person name="Lasko P."/>
            <person name="Lei Y."/>
            <person name="Levitsky A.A."/>
            <person name="Li J.H."/>
            <person name="Li Z."/>
            <person name="Liang Y."/>
            <person name="Lin X."/>
            <person name="Liu X."/>
            <person name="Mattei B."/>
            <person name="McIntosh T.C."/>
            <person name="McLeod M.P."/>
            <person name="McPherson D."/>
            <person name="Merkulov G."/>
            <person name="Milshina N.V."/>
            <person name="Mobarry C."/>
            <person name="Morris J."/>
            <person name="Moshrefi A."/>
            <person name="Mount S.M."/>
            <person name="Moy M."/>
            <person name="Murphy B."/>
            <person name="Murphy L."/>
            <person name="Muzny D.M."/>
            <person name="Nelson D.L."/>
            <person name="Nelson D.R."/>
            <person name="Nelson K.A."/>
            <person name="Nixon K."/>
            <person name="Nusskern D.R."/>
            <person name="Pacleb J.M."/>
            <person name="Palazzolo M."/>
            <person name="Pittman G.S."/>
            <person name="Pan S."/>
            <person name="Pollard J."/>
            <person name="Puri V."/>
            <person name="Reese M.G."/>
            <person name="Reinert K."/>
            <person name="Remington K."/>
            <person name="Saunders R.D.C."/>
            <person name="Scheeler F."/>
            <person name="Shen H."/>
            <person name="Shue B.C."/>
            <person name="Siden-Kiamos I."/>
            <person name="Simpson M."/>
            <person name="Skupski M.P."/>
            <person name="Smith T.J."/>
            <person name="Spier E."/>
            <person name="Spradling A.C."/>
            <person name="Stapleton M."/>
            <person name="Strong R."/>
            <person name="Sun E."/>
            <person name="Svirskas R."/>
            <person name="Tector C."/>
            <person name="Turner R."/>
            <person name="Venter E."/>
            <person name="Wang A.H."/>
            <person name="Wang X."/>
            <person name="Wang Z.-Y."/>
            <person name="Wassarman D.A."/>
            <person name="Weinstock G.M."/>
            <person name="Weissenbach J."/>
            <person name="Williams S.M."/>
            <person name="Woodage T."/>
            <person name="Worley K.C."/>
            <person name="Wu D."/>
            <person name="Yang S."/>
            <person name="Yao Q.A."/>
            <person name="Ye J."/>
            <person name="Yeh R.-F."/>
            <person name="Zaveri J.S."/>
            <person name="Zhan M."/>
            <person name="Zhang G."/>
            <person name="Zhao Q."/>
            <person name="Zheng L."/>
            <person name="Zheng X.H."/>
            <person name="Zhong F.N."/>
            <person name="Zhong W."/>
            <person name="Zhou X."/>
            <person name="Zhu S.C."/>
            <person name="Zhu X."/>
            <person name="Smith H.O."/>
            <person name="Gibbs R.A."/>
            <person name="Myers E.W."/>
            <person name="Rubin G.M."/>
            <person name="Venter J.C."/>
        </authorList>
    </citation>
    <scope>NUCLEOTIDE SEQUENCE [LARGE SCALE GENOMIC DNA]</scope>
    <source>
        <strain evidence="5">Berkeley</strain>
    </source>
</reference>
<reference evidence="14 17" key="5">
    <citation type="journal article" date="2002" name="Genome Biol.">
        <title>Annotation of the Drosophila melanogaster euchromatic genome: a systematic review.</title>
        <authorList>
            <person name="Misra S."/>
            <person name="Crosby M.A."/>
            <person name="Mungall C.J."/>
            <person name="Matthews B.B."/>
            <person name="Campbell K.S."/>
            <person name="Hradecky P."/>
            <person name="Huang Y."/>
            <person name="Kaminker J.S."/>
            <person name="Millburn G.H."/>
            <person name="Prochnik S.E."/>
            <person name="Smith C.D."/>
            <person name="Tupy J.L."/>
            <person name="Whitfield E.J."/>
            <person name="Bayraktaroglu L."/>
            <person name="Berman B.P."/>
            <person name="Bettencourt B.R."/>
            <person name="Celniker S.E."/>
            <person name="de Grey A.D.N.J."/>
            <person name="Drysdale R.A."/>
            <person name="Harris N.L."/>
            <person name="Richter J."/>
            <person name="Russo S."/>
            <person name="Schroeder A.J."/>
            <person name="Shu S.Q."/>
            <person name="Stapleton M."/>
            <person name="Yamada C."/>
            <person name="Ashburner M."/>
            <person name="Gelbart W.M."/>
            <person name="Rubin G.M."/>
            <person name="Lewis S.E."/>
        </authorList>
    </citation>
    <scope>GENOME REANNOTATION</scope>
    <scope>ALTERNATIVE SPLICING</scope>
    <source>
        <strain>Berkeley</strain>
    </source>
</reference>
<reference key="6">
    <citation type="submission" date="2006-10" db="EMBL/GenBank/DDBJ databases">
        <authorList>
            <person name="Stapleton M."/>
            <person name="Carlson J.W."/>
            <person name="Frise E."/>
            <person name="Kapadia B."/>
            <person name="Park S."/>
            <person name="Wan K.H."/>
            <person name="Yu C."/>
            <person name="Celniker S.E."/>
        </authorList>
    </citation>
    <scope>NUCLEOTIDE SEQUENCE [LARGE SCALE MRNA] (ISOFORMS D AND F)</scope>
    <source>
        <strain>Berkeley</strain>
    </source>
</reference>
<reference key="7">
    <citation type="journal article" date="2008" name="J. Proteome Res.">
        <title>Phosphoproteome analysis of Drosophila melanogaster embryos.</title>
        <authorList>
            <person name="Zhai B."/>
            <person name="Villen J."/>
            <person name="Beausoleil S.A."/>
            <person name="Mintseris J."/>
            <person name="Gygi S.P."/>
        </authorList>
    </citation>
    <scope>PHOSPHORYLATION [LARGE SCALE ANALYSIS] AT SER-209; SER-212 AND SER-214</scope>
    <scope>IDENTIFICATION BY MASS SPECTROMETRY</scope>
    <source>
        <tissue>Embryo</tissue>
    </source>
</reference>
<reference key="8">
    <citation type="journal article" date="2018" name="Elife">
        <title>A kinase-dependent feedforward loop affects CREBB stability and long term memory formation.</title>
        <authorList>
            <person name="Lee P.T."/>
            <person name="Lin G."/>
            <person name="Lin W.W."/>
            <person name="Diao F."/>
            <person name="White B.H."/>
            <person name="Bellen H.J."/>
        </authorList>
    </citation>
    <scope>FUNCTION</scope>
    <scope>DISRUPTION PHENOTYPE</scope>
</reference>
<gene>
    <name evidence="18" type="primary">CrebB</name>
    <name evidence="17" type="synonym">CrebB-17A</name>
    <name type="ORF">CG6103</name>
</gene>
<protein>
    <recommendedName>
        <fullName>Cyclic AMP response element-binding protein B</fullName>
        <shortName>cAMP response element-binding protein B</shortName>
        <shortName>dCREB-B</shortName>
    </recommendedName>
</protein>
<feature type="chain" id="PRO_0000076636" description="Cyclic AMP response element-binding protein B">
    <location>
        <begin position="1"/>
        <end position="359"/>
    </location>
</feature>
<feature type="domain" description="KID" evidence="2">
    <location>
        <begin position="198"/>
        <end position="257"/>
    </location>
</feature>
<feature type="domain" description="bZIP" evidence="3">
    <location>
        <begin position="300"/>
        <end position="359"/>
    </location>
</feature>
<feature type="region of interest" description="Disordered" evidence="4">
    <location>
        <begin position="1"/>
        <end position="73"/>
    </location>
</feature>
<feature type="region of interest" description="Disordered" evidence="4">
    <location>
        <begin position="185"/>
        <end position="238"/>
    </location>
</feature>
<feature type="region of interest" description="Basic motif" evidence="3">
    <location>
        <begin position="301"/>
        <end position="326"/>
    </location>
</feature>
<feature type="region of interest" description="Leucine-zipper" evidence="3">
    <location>
        <begin position="328"/>
        <end position="349"/>
    </location>
</feature>
<feature type="compositionally biased region" description="Low complexity" evidence="4">
    <location>
        <begin position="9"/>
        <end position="32"/>
    </location>
</feature>
<feature type="compositionally biased region" description="Gly residues" evidence="4">
    <location>
        <begin position="33"/>
        <end position="47"/>
    </location>
</feature>
<feature type="compositionally biased region" description="Low complexity" evidence="4">
    <location>
        <begin position="48"/>
        <end position="70"/>
    </location>
</feature>
<feature type="compositionally biased region" description="Basic and acidic residues" evidence="4">
    <location>
        <begin position="217"/>
        <end position="227"/>
    </location>
</feature>
<feature type="modified residue" description="Phosphoserine" evidence="2 7">
    <location>
        <position position="209"/>
    </location>
</feature>
<feature type="modified residue" description="Phosphoserine" evidence="2 7">
    <location>
        <position position="212"/>
    </location>
</feature>
<feature type="modified residue" description="Phosphoserine" evidence="2 7">
    <location>
        <position position="214"/>
    </location>
</feature>
<feature type="splice variant" id="VSP_051590" description="In isoform D, isoform F, isoform G and isoform J." evidence="11 12 13">
    <location>
        <begin position="101"/>
        <end position="128"/>
    </location>
</feature>
<feature type="splice variant" id="VSP_051591" description="In isoform G and isoform J." evidence="11 12">
    <location>
        <begin position="185"/>
        <end position="188"/>
    </location>
</feature>
<feature type="splice variant" id="VSP_051592" description="In isoform F and isoform J." evidence="12 13">
    <original>GASLPMSDGVLNSQLAGTGAGGNAANSSLMQLDPTYYLSNRMSYNTN</original>
    <variation>D</variation>
    <location>
        <begin position="245"/>
        <end position="291"/>
    </location>
</feature>
<feature type="mutagenesis site" description="Fails to block PKA-dependent activation by isoform E; in isoform G." evidence="9">
    <original>L</original>
    <variation>V</variation>
    <location>
        <position position="328"/>
    </location>
</feature>
<feature type="mutagenesis site" description="Fails to block PKA-dependent activation by isoform E; in isoform G." evidence="9">
    <original>L</original>
    <variation>V</variation>
    <location>
        <position position="335"/>
    </location>
</feature>
<feature type="sequence conflict" description="In Ref. 2; AAB35092." evidence="14" ref="2">
    <original>G</original>
    <variation>GG</variation>
    <location>
        <position position="46"/>
    </location>
</feature>
<feature type="sequence conflict" description="In Ref. 2; AAB35092." evidence="14" ref="2">
    <original>A</original>
    <variation>V</variation>
    <location>
        <position position="260"/>
    </location>
</feature>
<feature type="sequence conflict" description="In Ref. 6; ABI34195/ABI34226." evidence="14" ref="6">
    <original>T</original>
    <variation>A</variation>
    <location>
        <position position="290"/>
    </location>
</feature>
<accession>Q9VWW0</accession>
<accession>A8JUN2</accession>
<accession>A8JUN4</accession>
<accession>Q0IGS5</accession>
<accession>Q0IGV7</accession>
<accession>Q26329</accession>
<accession>Q26446</accession>
<accession>Q7KUW0</accession>
<accession>Q7KUW1</accession>
<accession>Q8IQY4</accession>
<sequence length="359" mass="37939">MDNSIVEENGNSSAASGSNDVVDVVAQQAAAAVGGGGGGGGGGGGGNPQQQQQNPQSTTAGGPTGATNNAQGGGVSSVLTTTANCNIQYPIQTLAQHGLQVSIWGPGAWCQLSSVRCYGSQPEVATKDVQSVIQANPSGVIQTAAGTQQQQQALAAATAMQKVVYVAKPPNSTVIHTTPGNAVQVRNKIPPTFPCKIKPEPNTQHPEDSDESLSDDDSQHHRSELTRRPSYNKIFTEISGPDMSGASLPMSDGVLNSQLAGTGAGGNAANSSLMQLDPTYYLSNRMSYNTNNSGIAEDQTRKREIRLQKNREAARECRRKKKEYIKCLENRVAVLENQNKALIEELKSLKELYCQTKND</sequence>
<proteinExistence type="evidence at protein level"/>
<name>CREBB_DROME</name>
<organism>
    <name type="scientific">Drosophila melanogaster</name>
    <name type="common">Fruit fly</name>
    <dbReference type="NCBI Taxonomy" id="7227"/>
    <lineage>
        <taxon>Eukaryota</taxon>
        <taxon>Metazoa</taxon>
        <taxon>Ecdysozoa</taxon>
        <taxon>Arthropoda</taxon>
        <taxon>Hexapoda</taxon>
        <taxon>Insecta</taxon>
        <taxon>Pterygota</taxon>
        <taxon>Neoptera</taxon>
        <taxon>Endopterygota</taxon>
        <taxon>Diptera</taxon>
        <taxon>Brachycera</taxon>
        <taxon>Muscomorpha</taxon>
        <taxon>Ephydroidea</taxon>
        <taxon>Drosophilidae</taxon>
        <taxon>Drosophila</taxon>
        <taxon>Sophophora</taxon>
    </lineage>
</organism>